<reference key="1">
    <citation type="journal article" date="1989" name="Nucleic Acids Res.">
        <title>Nucleotide cDNA sequence coding for the PVXc coat protein.</title>
        <authorList>
            <person name="Mandel M.A."/>
            <person name="Orman B.O."/>
            <person name="Celnik R.M."/>
            <person name="Torres H.N."/>
            <person name="Mentaberry A.N."/>
        </authorList>
    </citation>
    <scope>NUCLEOTIDE SEQUENCE [GENOMIC RNA]</scope>
</reference>
<reference key="2">
    <citation type="journal article" date="2005" name="Mol. Plant Microbe Interact.">
        <title>A new cell-to-cell transport model for Potexviruses.</title>
        <authorList>
            <person name="Verchot-Lubicz J."/>
        </authorList>
    </citation>
    <scope>REVIEW</scope>
</reference>
<accession>P10466</accession>
<keyword id="KW-1043">Host membrane</keyword>
<keyword id="KW-0472">Membrane</keyword>
<keyword id="KW-0812">Transmembrane</keyword>
<keyword id="KW-1133">Transmembrane helix</keyword>
<keyword id="KW-0813">Transport</keyword>
<keyword id="KW-0916">Viral movement protein</keyword>
<name>TGB2_PVXXC</name>
<feature type="chain" id="PRO_0000222591" description="TGB2 protein">
    <location>
        <begin position="1" status="less than"/>
        <end position="55"/>
    </location>
</feature>
<feature type="transmembrane region" description="Helical" evidence="1">
    <location>
        <begin position="20"/>
        <end position="39"/>
    </location>
</feature>
<feature type="non-terminal residue">
    <location>
        <position position="1"/>
    </location>
</feature>
<organism>
    <name type="scientific">Potato virus X (strain Xc)</name>
    <name type="common">PVX</name>
    <dbReference type="NCBI Taxonomy" id="12186"/>
    <lineage>
        <taxon>Viruses</taxon>
        <taxon>Riboviria</taxon>
        <taxon>Orthornavirae</taxon>
        <taxon>Kitrinoviricota</taxon>
        <taxon>Alsuviricetes</taxon>
        <taxon>Tymovirales</taxon>
        <taxon>Alphaflexiviridae</taxon>
        <taxon>Potexvirus</taxon>
        <taxon>Potato virus X</taxon>
    </lineage>
</organism>
<evidence type="ECO:0000255" key="1"/>
<evidence type="ECO:0000305" key="2"/>
<comment type="function">
    <text>The three proteins TGB1, TGB2 and TGB3 are required for virus movement.</text>
</comment>
<comment type="subcellular location">
    <subcellularLocation>
        <location evidence="2">Host membrane</location>
        <topology evidence="2">Multi-pass membrane protein</topology>
    </subcellularLocation>
</comment>
<comment type="similarity">
    <text evidence="2">Belongs to the carlavirus/potexvirus TGB2 protein family.</text>
</comment>
<proteinExistence type="inferred from homology"/>
<sequence>AVLYNSPNFGSRTSLSNGKNAAFAVVLLLSLLIYGSRCLSQRNHLCACGNNHSSH</sequence>
<organismHost>
    <name type="scientific">Brassica campestris</name>
    <name type="common">Field mustard</name>
    <dbReference type="NCBI Taxonomy" id="3711"/>
</organismHost>
<organismHost>
    <name type="scientific">Solanum tuberosum</name>
    <name type="common">Potato</name>
    <dbReference type="NCBI Taxonomy" id="4113"/>
</organismHost>
<dbReference type="EMBL" id="X12804">
    <property type="protein sequence ID" value="CAA31292.1"/>
    <property type="molecule type" value="Genomic_RNA"/>
</dbReference>
<dbReference type="PIR" id="S03196">
    <property type="entry name" value="S03196"/>
</dbReference>
<dbReference type="SMR" id="P10466"/>
<dbReference type="GO" id="GO:0033644">
    <property type="term" value="C:host cell membrane"/>
    <property type="evidence" value="ECO:0007669"/>
    <property type="project" value="UniProtKB-SubCell"/>
</dbReference>
<dbReference type="GO" id="GO:0016020">
    <property type="term" value="C:membrane"/>
    <property type="evidence" value="ECO:0007669"/>
    <property type="project" value="UniProtKB-KW"/>
</dbReference>
<dbReference type="GO" id="GO:0046740">
    <property type="term" value="P:transport of virus in host, cell to cell"/>
    <property type="evidence" value="ECO:0007669"/>
    <property type="project" value="UniProtKB-KW"/>
</dbReference>
<dbReference type="InterPro" id="IPR001896">
    <property type="entry name" value="Plant_vir_prot"/>
</dbReference>
<dbReference type="Pfam" id="PF01307">
    <property type="entry name" value="Plant_vir_prot"/>
    <property type="match status" value="1"/>
</dbReference>
<protein>
    <recommendedName>
        <fullName>TGB2 protein</fullName>
    </recommendedName>
    <alternativeName>
        <fullName>12 kDa protein</fullName>
    </alternativeName>
    <alternativeName>
        <fullName>ORF3 protein</fullName>
    </alternativeName>
    <alternativeName>
        <fullName>TGBp2</fullName>
    </alternativeName>
    <alternativeName>
        <fullName>Triple gene block 2 protein</fullName>
    </alternativeName>
</protein>
<gene>
    <name type="ORF">ORF3</name>
</gene>